<protein>
    <recommendedName>
        <fullName>Hemoglobin subunit beta-2</fullName>
    </recommendedName>
    <alternativeName>
        <fullName>Beta-2-globin</fullName>
    </alternativeName>
    <alternativeName>
        <fullName>Hemoglobin beta-2 chain</fullName>
    </alternativeName>
</protein>
<accession>P68065</accession>
<accession>P10884</accession>
<reference key="1">
    <citation type="journal article" date="1988" name="Z. Naturforsch. C">
        <title>Carnivora: the primary structure of the major and minor hemoglobin components of adult north Persian leopard (Panthera pardus sexicolor).</title>
        <authorList>
            <person name="Ahmed A."/>
            <person name="Jahan M."/>
            <person name="Braunitzer G."/>
            <person name="Goeltenboth R."/>
        </authorList>
    </citation>
    <scope>PROTEIN SEQUENCE</scope>
</reference>
<evidence type="ECO:0000250" key="1">
    <source>
        <dbReference type="UniProtKB" id="P02089"/>
    </source>
</evidence>
<evidence type="ECO:0000250" key="2">
    <source>
        <dbReference type="UniProtKB" id="P02091"/>
    </source>
</evidence>
<evidence type="ECO:0000255" key="3">
    <source>
        <dbReference type="PROSITE-ProRule" id="PRU00238"/>
    </source>
</evidence>
<dbReference type="PIR" id="S03929">
    <property type="entry name" value="HBPD2P"/>
</dbReference>
<dbReference type="SMR" id="P68065"/>
<dbReference type="GO" id="GO:0072562">
    <property type="term" value="C:blood microparticle"/>
    <property type="evidence" value="ECO:0007669"/>
    <property type="project" value="TreeGrafter"/>
</dbReference>
<dbReference type="GO" id="GO:0031838">
    <property type="term" value="C:haptoglobin-hemoglobin complex"/>
    <property type="evidence" value="ECO:0007669"/>
    <property type="project" value="TreeGrafter"/>
</dbReference>
<dbReference type="GO" id="GO:0005833">
    <property type="term" value="C:hemoglobin complex"/>
    <property type="evidence" value="ECO:0007669"/>
    <property type="project" value="InterPro"/>
</dbReference>
<dbReference type="GO" id="GO:0031720">
    <property type="term" value="F:haptoglobin binding"/>
    <property type="evidence" value="ECO:0007669"/>
    <property type="project" value="TreeGrafter"/>
</dbReference>
<dbReference type="GO" id="GO:0020037">
    <property type="term" value="F:heme binding"/>
    <property type="evidence" value="ECO:0007669"/>
    <property type="project" value="InterPro"/>
</dbReference>
<dbReference type="GO" id="GO:0031721">
    <property type="term" value="F:hemoglobin alpha binding"/>
    <property type="evidence" value="ECO:0007669"/>
    <property type="project" value="TreeGrafter"/>
</dbReference>
<dbReference type="GO" id="GO:0046872">
    <property type="term" value="F:metal ion binding"/>
    <property type="evidence" value="ECO:0007669"/>
    <property type="project" value="UniProtKB-KW"/>
</dbReference>
<dbReference type="GO" id="GO:0043177">
    <property type="term" value="F:organic acid binding"/>
    <property type="evidence" value="ECO:0007669"/>
    <property type="project" value="TreeGrafter"/>
</dbReference>
<dbReference type="GO" id="GO:0019825">
    <property type="term" value="F:oxygen binding"/>
    <property type="evidence" value="ECO:0007669"/>
    <property type="project" value="InterPro"/>
</dbReference>
<dbReference type="GO" id="GO:0005344">
    <property type="term" value="F:oxygen carrier activity"/>
    <property type="evidence" value="ECO:0007669"/>
    <property type="project" value="UniProtKB-KW"/>
</dbReference>
<dbReference type="GO" id="GO:0004601">
    <property type="term" value="F:peroxidase activity"/>
    <property type="evidence" value="ECO:0007669"/>
    <property type="project" value="TreeGrafter"/>
</dbReference>
<dbReference type="GO" id="GO:0042744">
    <property type="term" value="P:hydrogen peroxide catabolic process"/>
    <property type="evidence" value="ECO:0007669"/>
    <property type="project" value="TreeGrafter"/>
</dbReference>
<dbReference type="CDD" id="cd08925">
    <property type="entry name" value="Hb-beta-like"/>
    <property type="match status" value="1"/>
</dbReference>
<dbReference type="FunFam" id="1.10.490.10:FF:000001">
    <property type="entry name" value="Hemoglobin subunit beta"/>
    <property type="match status" value="1"/>
</dbReference>
<dbReference type="Gene3D" id="1.10.490.10">
    <property type="entry name" value="Globins"/>
    <property type="match status" value="1"/>
</dbReference>
<dbReference type="InterPro" id="IPR000971">
    <property type="entry name" value="Globin"/>
</dbReference>
<dbReference type="InterPro" id="IPR009050">
    <property type="entry name" value="Globin-like_sf"/>
</dbReference>
<dbReference type="InterPro" id="IPR012292">
    <property type="entry name" value="Globin/Proto"/>
</dbReference>
<dbReference type="InterPro" id="IPR002337">
    <property type="entry name" value="Hemoglobin_b"/>
</dbReference>
<dbReference type="InterPro" id="IPR050056">
    <property type="entry name" value="Hemoglobin_oxygen_transport"/>
</dbReference>
<dbReference type="PANTHER" id="PTHR11442">
    <property type="entry name" value="HEMOGLOBIN FAMILY MEMBER"/>
    <property type="match status" value="1"/>
</dbReference>
<dbReference type="PANTHER" id="PTHR11442:SF42">
    <property type="entry name" value="HEMOGLOBIN SUBUNIT BETA"/>
    <property type="match status" value="1"/>
</dbReference>
<dbReference type="Pfam" id="PF00042">
    <property type="entry name" value="Globin"/>
    <property type="match status" value="1"/>
</dbReference>
<dbReference type="PRINTS" id="PR00814">
    <property type="entry name" value="BETAHAEM"/>
</dbReference>
<dbReference type="SUPFAM" id="SSF46458">
    <property type="entry name" value="Globin-like"/>
    <property type="match status" value="1"/>
</dbReference>
<dbReference type="PROSITE" id="PS01033">
    <property type="entry name" value="GLOBIN"/>
    <property type="match status" value="1"/>
</dbReference>
<gene>
    <name type="primary">HBB2</name>
</gene>
<proteinExistence type="evidence at protein level"/>
<organism>
    <name type="scientific">Panthera pardus saxicolor</name>
    <name type="common">Northern Persian leopard</name>
    <dbReference type="NCBI Taxonomy" id="9693"/>
    <lineage>
        <taxon>Eukaryota</taxon>
        <taxon>Metazoa</taxon>
        <taxon>Chordata</taxon>
        <taxon>Craniata</taxon>
        <taxon>Vertebrata</taxon>
        <taxon>Euteleostomi</taxon>
        <taxon>Mammalia</taxon>
        <taxon>Eutheria</taxon>
        <taxon>Laurasiatheria</taxon>
        <taxon>Carnivora</taxon>
        <taxon>Feliformia</taxon>
        <taxon>Felidae</taxon>
        <taxon>Pantherinae</taxon>
        <taxon>Panthera</taxon>
    </lineage>
</organism>
<name>HBB2_PANPS</name>
<comment type="function">
    <text>Involved in oxygen transport from the lung to the various peripheral tissues.</text>
</comment>
<comment type="subunit">
    <text>Heterotetramer of two alpha chains and two beta chains.</text>
</comment>
<comment type="tissue specificity">
    <text>Red blood cells.</text>
</comment>
<comment type="miscellaneous">
    <text>In the cat family (felidae), the oxygen affinity of hemoglobin depends little or not at all on the association with diphosphoglycerate (DPG).</text>
</comment>
<comment type="similarity">
    <text evidence="3">Belongs to the globin family.</text>
</comment>
<sequence>GFLSAEEKGLVNGLWSKVNVDEVGGEALGRLLVVYPWTQRFFQSFGDLSSADAIMSNAKVKAHGKKVLNSFSDGLKNIDDLKGAFAKLSELHCDKLHVDPENFRLLGNVLVCVLAHHFGHEFNPQVQAAFQKVVAGVASALAHRYH</sequence>
<keyword id="KW-0903">Direct protein sequencing</keyword>
<keyword id="KW-0349">Heme</keyword>
<keyword id="KW-0408">Iron</keyword>
<keyword id="KW-0479">Metal-binding</keyword>
<keyword id="KW-0488">Methylation</keyword>
<keyword id="KW-0561">Oxygen transport</keyword>
<keyword id="KW-0597">Phosphoprotein</keyword>
<keyword id="KW-0813">Transport</keyword>
<feature type="chain" id="PRO_0000053059" description="Hemoglobin subunit beta-2">
    <location>
        <begin position="1"/>
        <end position="146"/>
    </location>
</feature>
<feature type="domain" description="Globin" evidence="3">
    <location>
        <begin position="2"/>
        <end position="146"/>
    </location>
</feature>
<feature type="binding site" description="distal binding residue">
    <location>
        <position position="63"/>
    </location>
    <ligand>
        <name>heme b</name>
        <dbReference type="ChEBI" id="CHEBI:60344"/>
    </ligand>
    <ligandPart>
        <name>Fe</name>
        <dbReference type="ChEBI" id="CHEBI:18248"/>
    </ligandPart>
</feature>
<feature type="binding site" description="proximal binding residue">
    <location>
        <position position="92"/>
    </location>
    <ligand>
        <name>heme b</name>
        <dbReference type="ChEBI" id="CHEBI:60344"/>
    </ligand>
    <ligandPart>
        <name>Fe</name>
        <dbReference type="ChEBI" id="CHEBI:18248"/>
    </ligandPart>
</feature>
<feature type="modified residue" description="N6-succinyllysine" evidence="1">
    <location>
        <position position="17"/>
    </location>
</feature>
<feature type="modified residue" description="Phosphoserine" evidence="1">
    <location>
        <position position="44"/>
    </location>
</feature>
<feature type="modified residue" description="Phosphoserine" evidence="2">
    <location>
        <position position="50"/>
    </location>
</feature>
<feature type="modified residue" description="N6-succinyllysine" evidence="1">
    <location>
        <position position="59"/>
    </location>
</feature>
<feature type="modified residue" description="Asymmetric dimethylarginine" evidence="1">
    <location>
        <position position="104"/>
    </location>
</feature>